<organism>
    <name type="scientific">Burkholderia ambifaria (strain ATCC BAA-244 / DSM 16087 / CCUG 44356 / LMG 19182 / AMMD)</name>
    <name type="common">Burkholderia cepacia (strain AMMD)</name>
    <dbReference type="NCBI Taxonomy" id="339670"/>
    <lineage>
        <taxon>Bacteria</taxon>
        <taxon>Pseudomonadati</taxon>
        <taxon>Pseudomonadota</taxon>
        <taxon>Betaproteobacteria</taxon>
        <taxon>Burkholderiales</taxon>
        <taxon>Burkholderiaceae</taxon>
        <taxon>Burkholderia</taxon>
        <taxon>Burkholderia cepacia complex</taxon>
    </lineage>
</organism>
<keyword id="KW-0012">Acyltransferase</keyword>
<keyword id="KW-0028">Amino-acid biosynthesis</keyword>
<keyword id="KW-0963">Cytoplasm</keyword>
<keyword id="KW-0486">Methionine biosynthesis</keyword>
<keyword id="KW-0808">Transferase</keyword>
<reference key="1">
    <citation type="submission" date="2006-08" db="EMBL/GenBank/DDBJ databases">
        <title>Complete sequence of chromosome 1 of Burkholderia cepacia AMMD.</title>
        <authorList>
            <person name="Copeland A."/>
            <person name="Lucas S."/>
            <person name="Lapidus A."/>
            <person name="Barry K."/>
            <person name="Detter J.C."/>
            <person name="Glavina del Rio T."/>
            <person name="Hammon N."/>
            <person name="Israni S."/>
            <person name="Pitluck S."/>
            <person name="Bruce D."/>
            <person name="Chain P."/>
            <person name="Malfatti S."/>
            <person name="Shin M."/>
            <person name="Vergez L."/>
            <person name="Schmutz J."/>
            <person name="Larimer F."/>
            <person name="Land M."/>
            <person name="Hauser L."/>
            <person name="Kyrpides N."/>
            <person name="Kim E."/>
            <person name="Parke J."/>
            <person name="Coenye T."/>
            <person name="Konstantinidis K."/>
            <person name="Ramette A."/>
            <person name="Tiedje J."/>
            <person name="Richardson P."/>
        </authorList>
    </citation>
    <scope>NUCLEOTIDE SEQUENCE [LARGE SCALE GENOMIC DNA]</scope>
    <source>
        <strain>ATCC BAA-244 / DSM 16087 / CCUG 44356 / LMG 19182 / AMMD</strain>
    </source>
</reference>
<name>METXS_BURCM</name>
<sequence>MESIGIVAPQTMHFAEPLRLQSGSVIGNYQLVVETYGELNAARSNAVLVCHALNASHHVAGVYADDPRSTGWWDNMVGPGKPLDTNRFFVIGVNNLGSCFGSTGPMSIDPSSGKPYGARFPVVTVEDWVHAQARVADAFGIERFAAVMGGSLGGMQALAWSLMYPERVAHCIDIASTPKLSAQNIAFNEVARSAILSDPDFHGGDYYAHGVKPKRGLRVARMIGHITYLSDDDMAEKFGRALRRADGALDAYNFSFDVEFEVESYLRYQGDKFADYFDANTYLLITRALDYFDPAKAFDGNLTAALAHTQAKYLIASFSTDWRFAPARSREIVKALLDNKRTVSYAEIDAPHGHDAFLLDDARYHNLLRAYYERIANEVGA</sequence>
<dbReference type="EC" id="2.3.1.46" evidence="1"/>
<dbReference type="EMBL" id="CP000440">
    <property type="protein sequence ID" value="ABI88710.1"/>
    <property type="molecule type" value="Genomic_DNA"/>
</dbReference>
<dbReference type="SMR" id="Q0BAW3"/>
<dbReference type="ESTHER" id="burca-metx">
    <property type="family name" value="Homoserine_transacetylase"/>
</dbReference>
<dbReference type="KEGG" id="bam:Bamb_3154"/>
<dbReference type="PATRIC" id="fig|339670.21.peg.1705"/>
<dbReference type="eggNOG" id="COG2021">
    <property type="taxonomic scope" value="Bacteria"/>
</dbReference>
<dbReference type="UniPathway" id="UPA00051">
    <property type="reaction ID" value="UER00075"/>
</dbReference>
<dbReference type="Proteomes" id="UP000000662">
    <property type="component" value="Chromosome 1"/>
</dbReference>
<dbReference type="GO" id="GO:0005737">
    <property type="term" value="C:cytoplasm"/>
    <property type="evidence" value="ECO:0007669"/>
    <property type="project" value="UniProtKB-SubCell"/>
</dbReference>
<dbReference type="GO" id="GO:0004414">
    <property type="term" value="F:homoserine O-acetyltransferase activity"/>
    <property type="evidence" value="ECO:0007669"/>
    <property type="project" value="TreeGrafter"/>
</dbReference>
<dbReference type="GO" id="GO:0008899">
    <property type="term" value="F:homoserine O-succinyltransferase activity"/>
    <property type="evidence" value="ECO:0007669"/>
    <property type="project" value="UniProtKB-UniRule"/>
</dbReference>
<dbReference type="GO" id="GO:0009092">
    <property type="term" value="P:homoserine metabolic process"/>
    <property type="evidence" value="ECO:0007669"/>
    <property type="project" value="TreeGrafter"/>
</dbReference>
<dbReference type="GO" id="GO:0009086">
    <property type="term" value="P:methionine biosynthetic process"/>
    <property type="evidence" value="ECO:0007669"/>
    <property type="project" value="UniProtKB-UniRule"/>
</dbReference>
<dbReference type="FunFam" id="1.10.1740.110:FF:000001">
    <property type="entry name" value="Homoserine O-acetyltransferase"/>
    <property type="match status" value="1"/>
</dbReference>
<dbReference type="Gene3D" id="1.10.1740.110">
    <property type="match status" value="1"/>
</dbReference>
<dbReference type="Gene3D" id="3.40.50.1820">
    <property type="entry name" value="alpha/beta hydrolase"/>
    <property type="match status" value="1"/>
</dbReference>
<dbReference type="HAMAP" id="MF_00296">
    <property type="entry name" value="MetX_acyltransf"/>
    <property type="match status" value="1"/>
</dbReference>
<dbReference type="InterPro" id="IPR000073">
    <property type="entry name" value="AB_hydrolase_1"/>
</dbReference>
<dbReference type="InterPro" id="IPR029058">
    <property type="entry name" value="AB_hydrolase_fold"/>
</dbReference>
<dbReference type="InterPro" id="IPR008220">
    <property type="entry name" value="HAT_MetX-like"/>
</dbReference>
<dbReference type="NCBIfam" id="TIGR01392">
    <property type="entry name" value="homoserO_Ac_trn"/>
    <property type="match status" value="1"/>
</dbReference>
<dbReference type="NCBIfam" id="NF001209">
    <property type="entry name" value="PRK00175.1"/>
    <property type="match status" value="1"/>
</dbReference>
<dbReference type="PANTHER" id="PTHR32268">
    <property type="entry name" value="HOMOSERINE O-ACETYLTRANSFERASE"/>
    <property type="match status" value="1"/>
</dbReference>
<dbReference type="PANTHER" id="PTHR32268:SF11">
    <property type="entry name" value="HOMOSERINE O-ACETYLTRANSFERASE"/>
    <property type="match status" value="1"/>
</dbReference>
<dbReference type="Pfam" id="PF00561">
    <property type="entry name" value="Abhydrolase_1"/>
    <property type="match status" value="1"/>
</dbReference>
<dbReference type="PIRSF" id="PIRSF000443">
    <property type="entry name" value="Homoser_Ac_trans"/>
    <property type="match status" value="1"/>
</dbReference>
<dbReference type="SUPFAM" id="SSF53474">
    <property type="entry name" value="alpha/beta-Hydrolases"/>
    <property type="match status" value="1"/>
</dbReference>
<feature type="chain" id="PRO_1000021869" description="Homoserine O-succinyltransferase">
    <location>
        <begin position="1"/>
        <end position="381"/>
    </location>
</feature>
<feature type="domain" description="AB hydrolase-1" evidence="1">
    <location>
        <begin position="45"/>
        <end position="360"/>
    </location>
</feature>
<feature type="active site" description="Nucleophile" evidence="1">
    <location>
        <position position="151"/>
    </location>
</feature>
<feature type="active site" evidence="1">
    <location>
        <position position="321"/>
    </location>
</feature>
<feature type="active site" evidence="1">
    <location>
        <position position="354"/>
    </location>
</feature>
<feature type="binding site" evidence="1">
    <location>
        <position position="221"/>
    </location>
    <ligand>
        <name>substrate</name>
    </ligand>
</feature>
<feature type="binding site" evidence="1">
    <location>
        <position position="355"/>
    </location>
    <ligand>
        <name>substrate</name>
    </ligand>
</feature>
<feature type="site" description="Important for acyl-CoA specificity" evidence="1">
    <location>
        <position position="323"/>
    </location>
</feature>
<gene>
    <name evidence="1" type="primary">metXS</name>
    <name type="ordered locus">Bamb_3154</name>
</gene>
<protein>
    <recommendedName>
        <fullName evidence="1">Homoserine O-succinyltransferase</fullName>
        <shortName evidence="1">HST</shortName>
        <ecNumber evidence="1">2.3.1.46</ecNumber>
    </recommendedName>
    <alternativeName>
        <fullName evidence="1">Homoserine transsuccinylase</fullName>
        <shortName evidence="1">HTS</shortName>
    </alternativeName>
</protein>
<evidence type="ECO:0000255" key="1">
    <source>
        <dbReference type="HAMAP-Rule" id="MF_00296"/>
    </source>
</evidence>
<accession>Q0BAW3</accession>
<proteinExistence type="inferred from homology"/>
<comment type="function">
    <text evidence="1">Transfers a succinyl group from succinyl-CoA to L-homoserine, forming succinyl-L-homoserine.</text>
</comment>
<comment type="catalytic activity">
    <reaction evidence="1">
        <text>L-homoserine + succinyl-CoA = O-succinyl-L-homoserine + CoA</text>
        <dbReference type="Rhea" id="RHEA:22008"/>
        <dbReference type="ChEBI" id="CHEBI:57287"/>
        <dbReference type="ChEBI" id="CHEBI:57292"/>
        <dbReference type="ChEBI" id="CHEBI:57476"/>
        <dbReference type="ChEBI" id="CHEBI:57661"/>
        <dbReference type="EC" id="2.3.1.46"/>
    </reaction>
</comment>
<comment type="pathway">
    <text evidence="1">Amino-acid biosynthesis; L-methionine biosynthesis via de novo pathway; O-succinyl-L-homoserine from L-homoserine: step 1/1.</text>
</comment>
<comment type="subunit">
    <text evidence="1">Homodimer.</text>
</comment>
<comment type="subcellular location">
    <subcellularLocation>
        <location evidence="1">Cytoplasm</location>
    </subcellularLocation>
</comment>
<comment type="similarity">
    <text evidence="1">Belongs to the AB hydrolase superfamily. MetX family.</text>
</comment>